<organism>
    <name type="scientific">Thermotoga maritima (strain ATCC 43589 / DSM 3109 / JCM 10099 / NBRC 100826 / MSB8)</name>
    <dbReference type="NCBI Taxonomy" id="243274"/>
    <lineage>
        <taxon>Bacteria</taxon>
        <taxon>Thermotogati</taxon>
        <taxon>Thermotogota</taxon>
        <taxon>Thermotogae</taxon>
        <taxon>Thermotogales</taxon>
        <taxon>Thermotogaceae</taxon>
        <taxon>Thermotoga</taxon>
    </lineage>
</organism>
<reference key="1">
    <citation type="journal article" date="1994" name="J. Bacteriol.">
        <title>Phylogenetic depth of S10 and spc operons: cloning and sequencing of a ribosomal protein gene cluster from the extremely thermophilic bacterium Thermotoga maritima.</title>
        <authorList>
            <person name="Sanangelantoni A.M."/>
            <person name="Bocchetta M."/>
            <person name="Cammarano P."/>
            <person name="Tiboni O."/>
        </authorList>
    </citation>
    <scope>NUCLEOTIDE SEQUENCE [GENOMIC DNA]</scope>
    <source>
        <strain>ATCC 43589 / DSM 3109 / JCM 10099 / NBRC 100826 / MSB8</strain>
    </source>
</reference>
<reference key="2">
    <citation type="journal article" date="1999" name="Nature">
        <title>Evidence for lateral gene transfer between Archaea and Bacteria from genome sequence of Thermotoga maritima.</title>
        <authorList>
            <person name="Nelson K.E."/>
            <person name="Clayton R.A."/>
            <person name="Gill S.R."/>
            <person name="Gwinn M.L."/>
            <person name="Dodson R.J."/>
            <person name="Haft D.H."/>
            <person name="Hickey E.K."/>
            <person name="Peterson J.D."/>
            <person name="Nelson W.C."/>
            <person name="Ketchum K.A."/>
            <person name="McDonald L.A."/>
            <person name="Utterback T.R."/>
            <person name="Malek J.A."/>
            <person name="Linher K.D."/>
            <person name="Garrett M.M."/>
            <person name="Stewart A.M."/>
            <person name="Cotton M.D."/>
            <person name="Pratt M.S."/>
            <person name="Phillips C.A."/>
            <person name="Richardson D.L."/>
            <person name="Heidelberg J.F."/>
            <person name="Sutton G.G."/>
            <person name="Fleischmann R.D."/>
            <person name="Eisen J.A."/>
            <person name="White O."/>
            <person name="Salzberg S.L."/>
            <person name="Smith H.O."/>
            <person name="Venter J.C."/>
            <person name="Fraser C.M."/>
        </authorList>
    </citation>
    <scope>NUCLEOTIDE SEQUENCE [LARGE SCALE GENOMIC DNA]</scope>
    <source>
        <strain>ATCC 43589 / DSM 3109 / JCM 10099 / NBRC 100826 / MSB8</strain>
    </source>
</reference>
<keyword id="KW-1185">Reference proteome</keyword>
<keyword id="KW-0687">Ribonucleoprotein</keyword>
<keyword id="KW-0689">Ribosomal protein</keyword>
<keyword id="KW-0694">RNA-binding</keyword>
<keyword id="KW-0699">rRNA-binding</keyword>
<name>RL2_THEMA</name>
<sequence>MGLKRFKPVTPGRRFMVISDFSDITKTEPEKSLLAPLKKTGGRNHHGRVTVRHRGGGHKRRYRIIDFKRYDKAGIPAKVLAIEYDPNRSARIALLLYADGEKRYILAPKGVNVGDTLMSGPDAEIRPGNALPLEKIPVGTLVHNVEFTPGKGGQIARAAGTYCQIMAKEGNYALLRMPSGELRKVHIKCYATVGVVGNEDHKNEVHGKAGRVRWLGRRPHVRGVAMNPVDHPHGGGEGRGKGHHPTSPWGLPTKGYKTRRGKRPSDKFIVRRRNEV</sequence>
<feature type="chain" id="PRO_0000129640" description="Large ribosomal subunit protein uL2">
    <location>
        <begin position="1"/>
        <end position="276"/>
    </location>
</feature>
<feature type="region of interest" description="Disordered" evidence="2">
    <location>
        <begin position="223"/>
        <end position="276"/>
    </location>
</feature>
<feature type="compositionally biased region" description="Basic and acidic residues" evidence="2">
    <location>
        <begin position="230"/>
        <end position="240"/>
    </location>
</feature>
<feature type="compositionally biased region" description="Basic and acidic residues" evidence="2">
    <location>
        <begin position="263"/>
        <end position="276"/>
    </location>
</feature>
<feature type="sequence conflict" description="In Ref. 1; CAA79780." evidence="3" ref="1">
    <original>K</original>
    <variation>N</variation>
    <location>
        <position position="168"/>
    </location>
</feature>
<feature type="sequence conflict" description="In Ref. 1; CAA79780." evidence="3" ref="1">
    <original>N</original>
    <variation>K</variation>
    <location>
        <position position="203"/>
    </location>
</feature>
<protein>
    <recommendedName>
        <fullName evidence="1">Large ribosomal subunit protein uL2</fullName>
    </recommendedName>
    <alternativeName>
        <fullName evidence="3">50S ribosomal protein L2</fullName>
    </alternativeName>
</protein>
<accession>P38510</accession>
<evidence type="ECO:0000255" key="1">
    <source>
        <dbReference type="HAMAP-Rule" id="MF_01320"/>
    </source>
</evidence>
<evidence type="ECO:0000256" key="2">
    <source>
        <dbReference type="SAM" id="MobiDB-lite"/>
    </source>
</evidence>
<evidence type="ECO:0000305" key="3"/>
<comment type="function">
    <text evidence="1">One of the primary rRNA binding proteins. Required for association of the 30S and 50S subunits to form the 70S ribosome, for tRNA binding and peptide bond formation. It has been suggested to have peptidyltransferase activity; this is somewhat controversial. Makes several contacts with the 16S rRNA in the 70S ribosome.</text>
</comment>
<comment type="subunit">
    <text evidence="1">Part of the 50S ribosomal subunit. Forms a bridge to the 30S subunit in the 70S ribosome.</text>
</comment>
<comment type="similarity">
    <text evidence="1">Belongs to the universal ribosomal protein uL2 family.</text>
</comment>
<gene>
    <name evidence="1" type="primary">rplB</name>
    <name type="ordered locus">TM_1497</name>
</gene>
<proteinExistence type="inferred from homology"/>
<dbReference type="EMBL" id="Z21677">
    <property type="protein sequence ID" value="CAA79780.1"/>
    <property type="molecule type" value="Genomic_DNA"/>
</dbReference>
<dbReference type="EMBL" id="AE000512">
    <property type="protein sequence ID" value="AAD36563.1"/>
    <property type="molecule type" value="Genomic_DNA"/>
</dbReference>
<dbReference type="PIR" id="A72250">
    <property type="entry name" value="A72250"/>
</dbReference>
<dbReference type="RefSeq" id="NP_229297.1">
    <property type="nucleotide sequence ID" value="NC_000853.1"/>
</dbReference>
<dbReference type="RefSeq" id="WP_004081830.1">
    <property type="nucleotide sequence ID" value="NC_000853.1"/>
</dbReference>
<dbReference type="SMR" id="P38510"/>
<dbReference type="FunCoup" id="P38510">
    <property type="interactions" value="361"/>
</dbReference>
<dbReference type="STRING" id="243274.TM_1497"/>
<dbReference type="PaxDb" id="243274-THEMA_06815"/>
<dbReference type="EnsemblBacteria" id="AAD36563">
    <property type="protein sequence ID" value="AAD36563"/>
    <property type="gene ID" value="TM_1497"/>
</dbReference>
<dbReference type="KEGG" id="tma:TM1497"/>
<dbReference type="KEGG" id="tmi:THEMA_06815"/>
<dbReference type="KEGG" id="tmm:Tmari_1505"/>
<dbReference type="KEGG" id="tmw:THMA_1529"/>
<dbReference type="eggNOG" id="COG0090">
    <property type="taxonomic scope" value="Bacteria"/>
</dbReference>
<dbReference type="InParanoid" id="P38510"/>
<dbReference type="OrthoDB" id="9778722at2"/>
<dbReference type="Proteomes" id="UP000008183">
    <property type="component" value="Chromosome"/>
</dbReference>
<dbReference type="GO" id="GO:0015934">
    <property type="term" value="C:large ribosomal subunit"/>
    <property type="evidence" value="ECO:0007669"/>
    <property type="project" value="InterPro"/>
</dbReference>
<dbReference type="GO" id="GO:0003723">
    <property type="term" value="F:RNA binding"/>
    <property type="evidence" value="ECO:0000318"/>
    <property type="project" value="GO_Central"/>
</dbReference>
<dbReference type="GO" id="GO:0019843">
    <property type="term" value="F:rRNA binding"/>
    <property type="evidence" value="ECO:0007669"/>
    <property type="project" value="UniProtKB-UniRule"/>
</dbReference>
<dbReference type="GO" id="GO:0003735">
    <property type="term" value="F:structural constituent of ribosome"/>
    <property type="evidence" value="ECO:0000318"/>
    <property type="project" value="GO_Central"/>
</dbReference>
<dbReference type="GO" id="GO:0016740">
    <property type="term" value="F:transferase activity"/>
    <property type="evidence" value="ECO:0007669"/>
    <property type="project" value="InterPro"/>
</dbReference>
<dbReference type="GO" id="GO:0002181">
    <property type="term" value="P:cytoplasmic translation"/>
    <property type="evidence" value="ECO:0000318"/>
    <property type="project" value="GO_Central"/>
</dbReference>
<dbReference type="FunFam" id="2.30.30.30:FF:000001">
    <property type="entry name" value="50S ribosomal protein L2"/>
    <property type="match status" value="1"/>
</dbReference>
<dbReference type="FunFam" id="2.40.50.140:FF:000003">
    <property type="entry name" value="50S ribosomal protein L2"/>
    <property type="match status" value="1"/>
</dbReference>
<dbReference type="FunFam" id="4.10.950.10:FF:000001">
    <property type="entry name" value="50S ribosomal protein L2"/>
    <property type="match status" value="1"/>
</dbReference>
<dbReference type="Gene3D" id="2.30.30.30">
    <property type="match status" value="1"/>
</dbReference>
<dbReference type="Gene3D" id="2.40.50.140">
    <property type="entry name" value="Nucleic acid-binding proteins"/>
    <property type="match status" value="1"/>
</dbReference>
<dbReference type="Gene3D" id="4.10.950.10">
    <property type="entry name" value="Ribosomal protein L2, domain 3"/>
    <property type="match status" value="1"/>
</dbReference>
<dbReference type="HAMAP" id="MF_01320_B">
    <property type="entry name" value="Ribosomal_uL2_B"/>
    <property type="match status" value="1"/>
</dbReference>
<dbReference type="InterPro" id="IPR012340">
    <property type="entry name" value="NA-bd_OB-fold"/>
</dbReference>
<dbReference type="InterPro" id="IPR014722">
    <property type="entry name" value="Rib_uL2_dom2"/>
</dbReference>
<dbReference type="InterPro" id="IPR002171">
    <property type="entry name" value="Ribosomal_uL2"/>
</dbReference>
<dbReference type="InterPro" id="IPR005880">
    <property type="entry name" value="Ribosomal_uL2_bac/org-type"/>
</dbReference>
<dbReference type="InterPro" id="IPR022669">
    <property type="entry name" value="Ribosomal_uL2_C"/>
</dbReference>
<dbReference type="InterPro" id="IPR022671">
    <property type="entry name" value="Ribosomal_uL2_CS"/>
</dbReference>
<dbReference type="InterPro" id="IPR014726">
    <property type="entry name" value="Ribosomal_uL2_dom3"/>
</dbReference>
<dbReference type="InterPro" id="IPR022666">
    <property type="entry name" value="Ribosomal_uL2_RNA-bd_dom"/>
</dbReference>
<dbReference type="InterPro" id="IPR008991">
    <property type="entry name" value="Translation_prot_SH3-like_sf"/>
</dbReference>
<dbReference type="NCBIfam" id="TIGR01171">
    <property type="entry name" value="rplB_bact"/>
    <property type="match status" value="1"/>
</dbReference>
<dbReference type="PANTHER" id="PTHR13691:SF5">
    <property type="entry name" value="LARGE RIBOSOMAL SUBUNIT PROTEIN UL2M"/>
    <property type="match status" value="1"/>
</dbReference>
<dbReference type="PANTHER" id="PTHR13691">
    <property type="entry name" value="RIBOSOMAL PROTEIN L2"/>
    <property type="match status" value="1"/>
</dbReference>
<dbReference type="Pfam" id="PF00181">
    <property type="entry name" value="Ribosomal_L2"/>
    <property type="match status" value="1"/>
</dbReference>
<dbReference type="Pfam" id="PF03947">
    <property type="entry name" value="Ribosomal_L2_C"/>
    <property type="match status" value="1"/>
</dbReference>
<dbReference type="PIRSF" id="PIRSF002158">
    <property type="entry name" value="Ribosomal_L2"/>
    <property type="match status" value="1"/>
</dbReference>
<dbReference type="SMART" id="SM01383">
    <property type="entry name" value="Ribosomal_L2"/>
    <property type="match status" value="1"/>
</dbReference>
<dbReference type="SMART" id="SM01382">
    <property type="entry name" value="Ribosomal_L2_C"/>
    <property type="match status" value="1"/>
</dbReference>
<dbReference type="SUPFAM" id="SSF50249">
    <property type="entry name" value="Nucleic acid-binding proteins"/>
    <property type="match status" value="1"/>
</dbReference>
<dbReference type="SUPFAM" id="SSF50104">
    <property type="entry name" value="Translation proteins SH3-like domain"/>
    <property type="match status" value="1"/>
</dbReference>
<dbReference type="PROSITE" id="PS00467">
    <property type="entry name" value="RIBOSOMAL_L2"/>
    <property type="match status" value="1"/>
</dbReference>